<keyword id="KW-0064">Aspartyl protease</keyword>
<keyword id="KW-0997">Cell inner membrane</keyword>
<keyword id="KW-1003">Cell membrane</keyword>
<keyword id="KW-0378">Hydrolase</keyword>
<keyword id="KW-0472">Membrane</keyword>
<keyword id="KW-0645">Protease</keyword>
<keyword id="KW-0812">Transmembrane</keyword>
<keyword id="KW-1133">Transmembrane helix</keyword>
<dbReference type="EC" id="3.4.23.36" evidence="1"/>
<dbReference type="EMBL" id="BX572607">
    <property type="protein sequence ID" value="CAE29817.1"/>
    <property type="status" value="ALT_INIT"/>
    <property type="molecule type" value="Genomic_DNA"/>
</dbReference>
<dbReference type="RefSeq" id="WP_042441713.1">
    <property type="nucleotide sequence ID" value="NZ_CP116810.1"/>
</dbReference>
<dbReference type="SMR" id="Q6N1M9"/>
<dbReference type="STRING" id="258594.RPA4376"/>
<dbReference type="GeneID" id="66895510"/>
<dbReference type="eggNOG" id="COG0597">
    <property type="taxonomic scope" value="Bacteria"/>
</dbReference>
<dbReference type="HOGENOM" id="CLU_083252_4_3_5"/>
<dbReference type="PhylomeDB" id="Q6N1M9"/>
<dbReference type="UniPathway" id="UPA00665"/>
<dbReference type="GO" id="GO:0005886">
    <property type="term" value="C:plasma membrane"/>
    <property type="evidence" value="ECO:0007669"/>
    <property type="project" value="UniProtKB-SubCell"/>
</dbReference>
<dbReference type="GO" id="GO:0004190">
    <property type="term" value="F:aspartic-type endopeptidase activity"/>
    <property type="evidence" value="ECO:0007669"/>
    <property type="project" value="UniProtKB-UniRule"/>
</dbReference>
<dbReference type="GO" id="GO:0006508">
    <property type="term" value="P:proteolysis"/>
    <property type="evidence" value="ECO:0007669"/>
    <property type="project" value="UniProtKB-KW"/>
</dbReference>
<dbReference type="HAMAP" id="MF_00161">
    <property type="entry name" value="LspA"/>
    <property type="match status" value="1"/>
</dbReference>
<dbReference type="InterPro" id="IPR001872">
    <property type="entry name" value="Peptidase_A8"/>
</dbReference>
<dbReference type="NCBIfam" id="TIGR00077">
    <property type="entry name" value="lspA"/>
    <property type="match status" value="1"/>
</dbReference>
<dbReference type="PANTHER" id="PTHR33695">
    <property type="entry name" value="LIPOPROTEIN SIGNAL PEPTIDASE"/>
    <property type="match status" value="1"/>
</dbReference>
<dbReference type="PANTHER" id="PTHR33695:SF1">
    <property type="entry name" value="LIPOPROTEIN SIGNAL PEPTIDASE"/>
    <property type="match status" value="1"/>
</dbReference>
<dbReference type="Pfam" id="PF01252">
    <property type="entry name" value="Peptidase_A8"/>
    <property type="match status" value="1"/>
</dbReference>
<dbReference type="PRINTS" id="PR00781">
    <property type="entry name" value="LIPOSIGPTASE"/>
</dbReference>
<dbReference type="PROSITE" id="PS00855">
    <property type="entry name" value="SPASE_II"/>
    <property type="match status" value="1"/>
</dbReference>
<evidence type="ECO:0000255" key="1">
    <source>
        <dbReference type="HAMAP-Rule" id="MF_00161"/>
    </source>
</evidence>
<evidence type="ECO:0000305" key="2"/>
<feature type="chain" id="PRO_0000289417" description="Lipoprotein signal peptidase">
    <location>
        <begin position="1"/>
        <end position="164"/>
    </location>
</feature>
<feature type="transmembrane region" description="Helical" evidence="1">
    <location>
        <begin position="6"/>
        <end position="26"/>
    </location>
</feature>
<feature type="transmembrane region" description="Helical" evidence="1">
    <location>
        <begin position="39"/>
        <end position="59"/>
    </location>
</feature>
<feature type="transmembrane region" description="Helical" evidence="1">
    <location>
        <begin position="65"/>
        <end position="85"/>
    </location>
</feature>
<feature type="transmembrane region" description="Helical" evidence="1">
    <location>
        <begin position="88"/>
        <end position="108"/>
    </location>
</feature>
<feature type="transmembrane region" description="Helical" evidence="1">
    <location>
        <begin position="141"/>
        <end position="161"/>
    </location>
</feature>
<feature type="active site" evidence="1">
    <location>
        <position position="118"/>
    </location>
</feature>
<feature type="active site" evidence="1">
    <location>
        <position position="140"/>
    </location>
</feature>
<proteinExistence type="inferred from homology"/>
<comment type="function">
    <text evidence="1">This protein specifically catalyzes the removal of signal peptides from prolipoproteins.</text>
</comment>
<comment type="catalytic activity">
    <reaction evidence="1">
        <text>Release of signal peptides from bacterial membrane prolipoproteins. Hydrolyzes -Xaa-Yaa-Zaa-|-(S,diacylglyceryl)Cys-, in which Xaa is hydrophobic (preferably Leu), and Yaa (Ala or Ser) and Zaa (Gly or Ala) have small, neutral side chains.</text>
        <dbReference type="EC" id="3.4.23.36"/>
    </reaction>
</comment>
<comment type="pathway">
    <text evidence="1">Protein modification; lipoprotein biosynthesis (signal peptide cleavage).</text>
</comment>
<comment type="subcellular location">
    <subcellularLocation>
        <location evidence="1">Cell inner membrane</location>
        <topology evidence="1">Multi-pass membrane protein</topology>
    </subcellularLocation>
</comment>
<comment type="similarity">
    <text evidence="1">Belongs to the peptidase A8 family.</text>
</comment>
<comment type="sequence caution" evidence="2">
    <conflict type="erroneous initiation">
        <sequence resource="EMBL-CDS" id="CAE29817"/>
    </conflict>
</comment>
<accession>Q6N1M9</accession>
<gene>
    <name evidence="1" type="primary">lspA</name>
    <name type="ordered locus">RPA4376</name>
</gene>
<protein>
    <recommendedName>
        <fullName evidence="1">Lipoprotein signal peptidase</fullName>
        <ecNumber evidence="1">3.4.23.36</ecNumber>
    </recommendedName>
    <alternativeName>
        <fullName evidence="1">Prolipoprotein signal peptidase</fullName>
    </alternativeName>
    <alternativeName>
        <fullName evidence="1">Signal peptidase II</fullName>
        <shortName evidence="1">SPase II</shortName>
    </alternativeName>
</protein>
<organism>
    <name type="scientific">Rhodopseudomonas palustris (strain ATCC BAA-98 / CGA009)</name>
    <dbReference type="NCBI Taxonomy" id="258594"/>
    <lineage>
        <taxon>Bacteria</taxon>
        <taxon>Pseudomonadati</taxon>
        <taxon>Pseudomonadota</taxon>
        <taxon>Alphaproteobacteria</taxon>
        <taxon>Hyphomicrobiales</taxon>
        <taxon>Nitrobacteraceae</taxon>
        <taxon>Rhodopseudomonas</taxon>
    </lineage>
</organism>
<sequence>MTPVRLGVLAGIVALVLDQVTKLWLLYGFELARKGVVQVLPFFDLVLAWNTGISYGWFSGQGPTGQILMLAFKAVAIVALAIWMARSTTKLATIGLGLIIGGAIGNAIDRLAYGAVVDFALLHAEIGGKIYNWYVFNIADVAIVVGVAALLYDSLIGLPAAKAP</sequence>
<reference key="1">
    <citation type="journal article" date="2004" name="Nat. Biotechnol.">
        <title>Complete genome sequence of the metabolically versatile photosynthetic bacterium Rhodopseudomonas palustris.</title>
        <authorList>
            <person name="Larimer F.W."/>
            <person name="Chain P."/>
            <person name="Hauser L."/>
            <person name="Lamerdin J.E."/>
            <person name="Malfatti S."/>
            <person name="Do L."/>
            <person name="Land M.L."/>
            <person name="Pelletier D.A."/>
            <person name="Beatty J.T."/>
            <person name="Lang A.S."/>
            <person name="Tabita F.R."/>
            <person name="Gibson J.L."/>
            <person name="Hanson T.E."/>
            <person name="Bobst C."/>
            <person name="Torres y Torres J.L."/>
            <person name="Peres C."/>
            <person name="Harrison F.H."/>
            <person name="Gibson J."/>
            <person name="Harwood C.S."/>
        </authorList>
    </citation>
    <scope>NUCLEOTIDE SEQUENCE [LARGE SCALE GENOMIC DNA]</scope>
    <source>
        <strain>ATCC BAA-98 / CGA009</strain>
    </source>
</reference>
<name>LSPA_RHOPA</name>